<sequence length="47" mass="5196">MKLTYVLIVAMLVLVVCRADCFGRGGLCTWFDPSVCCSGICTFVDCW</sequence>
<proteinExistence type="inferred from homology"/>
<dbReference type="SMR" id="P0DTY0"/>
<dbReference type="GO" id="GO:0005576">
    <property type="term" value="C:extracellular region"/>
    <property type="evidence" value="ECO:0007669"/>
    <property type="project" value="UniProtKB-SubCell"/>
</dbReference>
<dbReference type="GO" id="GO:0090729">
    <property type="term" value="F:toxin activity"/>
    <property type="evidence" value="ECO:0007669"/>
    <property type="project" value="UniProtKB-KW"/>
</dbReference>
<feature type="signal peptide" evidence="1">
    <location>
        <begin position="1"/>
        <end position="19"/>
    </location>
</feature>
<feature type="peptide" id="PRO_0000450962" description="Conotoxin Cal6.18">
    <location>
        <begin position="20"/>
        <end position="47"/>
    </location>
</feature>
<protein>
    <recommendedName>
        <fullName evidence="3">Conotoxin Cal6.18</fullName>
    </recommendedName>
    <alternativeName>
        <fullName evidence="2">O1_cal6.18</fullName>
    </alternativeName>
</protein>
<accession>P0DTY0</accession>
<organism>
    <name type="scientific">Californiconus californicus</name>
    <name type="common">California cone</name>
    <name type="synonym">Conus californicus</name>
    <dbReference type="NCBI Taxonomy" id="1736779"/>
    <lineage>
        <taxon>Eukaryota</taxon>
        <taxon>Metazoa</taxon>
        <taxon>Spiralia</taxon>
        <taxon>Lophotrochozoa</taxon>
        <taxon>Mollusca</taxon>
        <taxon>Gastropoda</taxon>
        <taxon>Caenogastropoda</taxon>
        <taxon>Neogastropoda</taxon>
        <taxon>Conoidea</taxon>
        <taxon>Conidae</taxon>
        <taxon>Californiconus</taxon>
    </lineage>
</organism>
<name>O1618_CONCL</name>
<keyword id="KW-1015">Disulfide bond</keyword>
<keyword id="KW-0528">Neurotoxin</keyword>
<keyword id="KW-0964">Secreted</keyword>
<keyword id="KW-0732">Signal</keyword>
<keyword id="KW-0800">Toxin</keyword>
<evidence type="ECO:0000255" key="1"/>
<evidence type="ECO:0000303" key="2">
    <source>
    </source>
</evidence>
<evidence type="ECO:0000305" key="3"/>
<evidence type="ECO:0000305" key="4">
    <source>
    </source>
</evidence>
<reference key="1">
    <citation type="journal article" date="2019" name="Toxins">
        <title>The diversified O-superfamily in Californiconus californicus presents a conotoxin with antimycobacterial activity.</title>
        <authorList>
            <person name="Bernaldez-Sarabia J."/>
            <person name="Figueroa-Montiel A."/>
            <person name="Duenas S."/>
            <person name="Cervantes-Luevano K."/>
            <person name="Beltran J.A."/>
            <person name="Ortiz E."/>
            <person name="Jimenez S."/>
            <person name="Possani L.D."/>
            <person name="Paniagua-Solis J.F."/>
            <person name="Gonzalez-Canudas J."/>
            <person name="Licea-Navarro A."/>
        </authorList>
    </citation>
    <scope>NUCLEOTIDE SEQUENCE [MRNA]</scope>
    <source>
        <tissue>Venom duct</tissue>
    </source>
</reference>
<comment type="function">
    <text evidence="3">Probable neurotoxin.</text>
</comment>
<comment type="subcellular location">
    <subcellularLocation>
        <location evidence="4">Secreted</location>
    </subcellularLocation>
</comment>
<comment type="tissue specificity">
    <text evidence="4">Expressed by the venom duct.</text>
</comment>
<comment type="domain">
    <text evidence="3">The cysteine framework is C-C-C-CC-C-C.</text>
</comment>
<comment type="PTM">
    <text evidence="3">May contain 3 disulfide bonds.</text>
</comment>
<comment type="similarity">
    <text evidence="3">Belongs to the conotoxin O1 superfamily.</text>
</comment>